<evidence type="ECO:0000255" key="1">
    <source>
        <dbReference type="HAMAP-Rule" id="MF_04127"/>
    </source>
</evidence>
<evidence type="ECO:0000256" key="2">
    <source>
        <dbReference type="SAM" id="MobiDB-lite"/>
    </source>
</evidence>
<evidence type="ECO:0000269" key="3">
    <source>
    </source>
</evidence>
<evidence type="ECO:0000269" key="4">
    <source>
    </source>
</evidence>
<feature type="chain" id="PRO_0000367813" description="Inner capsid protein VP2">
    <location>
        <begin position="1"/>
        <end position="882"/>
    </location>
</feature>
<feature type="region of interest" description="5-fold hub; involved in the encapsidation of VP1 and VP3" evidence="1">
    <location>
        <begin position="1"/>
        <end position="82"/>
    </location>
</feature>
<feature type="region of interest" description="Disordered" evidence="2">
    <location>
        <begin position="1"/>
        <end position="47"/>
    </location>
</feature>
<feature type="region of interest" description="Hydrophobic" evidence="1">
    <location>
        <begin position="396"/>
        <end position="416"/>
    </location>
</feature>
<feature type="region of interest" description="Hydrophobic" evidence="1">
    <location>
        <begin position="424"/>
        <end position="444"/>
    </location>
</feature>
<feature type="compositionally biased region" description="Basic and acidic residues" evidence="2">
    <location>
        <begin position="9"/>
        <end position="27"/>
    </location>
</feature>
<feature type="compositionally biased region" description="Polar residues" evidence="2">
    <location>
        <begin position="28"/>
        <end position="39"/>
    </location>
</feature>
<feature type="site" description="Interaction with the intermediate capsid protein VP6" evidence="1">
    <location>
        <position position="222"/>
    </location>
</feature>
<feature type="site" description="Interaction with the intermediate capsid protein VP6" evidence="1">
    <location>
        <position position="226"/>
    </location>
</feature>
<feature type="site" description="Interaction with the intermediate capsid protein VP6" evidence="1">
    <location>
        <position position="230"/>
    </location>
</feature>
<feature type="site" description="Interaction with the intermediate capsid protein VP6" evidence="1">
    <location>
        <position position="841"/>
    </location>
</feature>
<feature type="site" description="Interaction with the intermediate capsid protein VP6" evidence="1">
    <location>
        <position position="843"/>
    </location>
</feature>
<name>VP2_ROTSH</name>
<protein>
    <recommendedName>
        <fullName evidence="1">Inner capsid protein VP2</fullName>
    </recommendedName>
</protein>
<keyword id="KW-0167">Capsid protein</keyword>
<keyword id="KW-1153">Inner capsid protein</keyword>
<keyword id="KW-1185">Reference proteome</keyword>
<keyword id="KW-0677">Repeat</keyword>
<keyword id="KW-0694">RNA-binding</keyword>
<keyword id="KW-1141">T=2 icosahedral capsid protein</keyword>
<keyword id="KW-0832">Ubl conjugation</keyword>
<keyword id="KW-0946">Virion</keyword>
<accession>A2T3R5</accession>
<organismHost>
    <name type="scientific">Chlorocebus pygerythrus</name>
    <name type="common">Vervet monkey</name>
    <name type="synonym">Cercopithecus pygerythrus</name>
    <dbReference type="NCBI Taxonomy" id="60710"/>
</organismHost>
<proteinExistence type="evidence at protein level"/>
<dbReference type="EMBL" id="DQ838635">
    <property type="protein sequence ID" value="ABG75814.1"/>
    <property type="molecule type" value="Genomic_RNA"/>
</dbReference>
<dbReference type="RefSeq" id="YP_002302226.1">
    <property type="nucleotide sequence ID" value="NC_011506.2"/>
</dbReference>
<dbReference type="SMR" id="A2T3R5"/>
<dbReference type="GeneID" id="7011366"/>
<dbReference type="KEGG" id="vg:7011366"/>
<dbReference type="Proteomes" id="UP000001119">
    <property type="component" value="Genome"/>
</dbReference>
<dbReference type="GO" id="GO:0039616">
    <property type="term" value="C:T=2 icosahedral viral capsid"/>
    <property type="evidence" value="ECO:0000314"/>
    <property type="project" value="UniProtKB"/>
</dbReference>
<dbReference type="GO" id="GO:0039625">
    <property type="term" value="C:viral inner capsid"/>
    <property type="evidence" value="ECO:0000314"/>
    <property type="project" value="UniProtKB"/>
</dbReference>
<dbReference type="GO" id="GO:0019013">
    <property type="term" value="C:viral nucleocapsid"/>
    <property type="evidence" value="ECO:0007669"/>
    <property type="project" value="UniProtKB-UniRule"/>
</dbReference>
<dbReference type="GO" id="GO:0003723">
    <property type="term" value="F:RNA binding"/>
    <property type="evidence" value="ECO:0007669"/>
    <property type="project" value="UniProtKB-UniRule"/>
</dbReference>
<dbReference type="HAMAP" id="MF_04123">
    <property type="entry name" value="Rota_VP2"/>
    <property type="match status" value="1"/>
</dbReference>
<dbReference type="HAMAP" id="MF_04127">
    <property type="entry name" value="Rota_VP2_A"/>
    <property type="match status" value="1"/>
</dbReference>
<dbReference type="InterPro" id="IPR007779">
    <property type="entry name" value="Rotavirus_VP2"/>
</dbReference>
<dbReference type="Pfam" id="PF05087">
    <property type="entry name" value="Rota_VP2"/>
    <property type="match status" value="1"/>
</dbReference>
<reference key="1">
    <citation type="journal article" date="2007" name="Virology">
        <title>Genome heterogeneity of SA11 rotavirus due to reassortment with 'O' agent.</title>
        <authorList>
            <person name="Small C."/>
            <person name="Barro M."/>
            <person name="Brown T.L."/>
            <person name="Patton J.T."/>
        </authorList>
    </citation>
    <scope>NUCLEOTIDE SEQUENCE [GENOMIC RNA]</scope>
</reference>
<reference key="2">
    <citation type="journal article" date="1997" name="J. Virol.">
        <title>Rotavirus RNA polymerase requires the core shell protein to synthesize the double-stranded RNA genome.</title>
        <authorList>
            <person name="Patton J.T."/>
            <person name="Jones M.T."/>
            <person name="Kalbach A.N."/>
            <person name="He Y.-W."/>
            <person name="Xiaobo J."/>
        </authorList>
    </citation>
    <scope>RNA-BINDING</scope>
</reference>
<reference key="3">
    <citation type="journal article" date="2008" name="Structure">
        <title>Mechanism for coordinated RNA packaging and genome replication by rotavirus polymerase VP1.</title>
        <authorList>
            <person name="Lu X."/>
            <person name="McDonald S.M."/>
            <person name="Tortorici M.A."/>
            <person name="Tao Y.J."/>
            <person name="Vasquez-Del Carpio R."/>
            <person name="Nibert M.L."/>
            <person name="Patton J.T."/>
            <person name="Harrison S.C."/>
        </authorList>
    </citation>
    <scope>FUNCTION</scope>
</reference>
<reference key="4">
    <citation type="journal article" date="2009" name="J. Virol.">
        <title>Rotavirus architecture at subnanometer resolution.</title>
        <authorList>
            <person name="Li Z."/>
            <person name="Baker M.L."/>
            <person name="Jiang W."/>
            <person name="Estes M.K."/>
            <person name="Prasad B.V.V."/>
        </authorList>
    </citation>
    <scope>STRUCTURE BY ELECTRON MICROSCOPY OF CAPSID SHELL</scope>
    <scope>INTERACTION WITH THE INTERMEDIATE CAPSID PROTEIN VP6</scope>
    <scope>FUNCTION</scope>
    <source>
        <strain>SA11-4F</strain>
    </source>
</reference>
<organism>
    <name type="scientific">Rotavirus A (isolate RVA/Monkey/South Africa/SA11-H96/1958/G3P5B[2])</name>
    <name type="common">RV-A</name>
    <name type="synonym">Simian Agent 11 (isolate SI/South Africa/H96/58)</name>
    <dbReference type="NCBI Taxonomy" id="450149"/>
    <lineage>
        <taxon>Viruses</taxon>
        <taxon>Riboviria</taxon>
        <taxon>Orthornavirae</taxon>
        <taxon>Duplornaviricota</taxon>
        <taxon>Resentoviricetes</taxon>
        <taxon>Reovirales</taxon>
        <taxon>Sedoreoviridae</taxon>
        <taxon>Rotavirus</taxon>
        <taxon>Rotavirus A</taxon>
    </lineage>
</organism>
<sequence>MAYRKRGARRETNLKQDERMQEKEDSKNINNDSPKSQLSEKVLSKKEEIITDNQEEVKISDEVKKSNKEESKQLLEVLKTKEEHQKEVQYEILQKTIPTFEPKESILKKLEDIKPEQAKKQTKLFRIFEPKQLPIYRANGERELRNRWYWKLKRDTLPDGDYDVREYFLNLYDQVLMEMPDYLLLKDMAVENKNSRDAGKVVDSETAAICDAIFQDEETEGAVRRFIAEMRQRVQADRNVVNYPSILHPIDHAFNEYFLQHQLVEPLNNDIIFNYIPERIRNDVNYILNMDRNLPSTARYIRPNLLQDRLNLHDNFESLWDTITTSNYILARSVVPDLKELVSTEAQIQKMSQDLQLEALTIQSETQFLTGINSQAANDCFKTLIAAMLSQRTMSLDFVTTNYMSLISGMWLLTVIPNDMFIRESLVACQLAIINTIVYPAFGMQRMHYRNGDPQTPFQIAEQQIQNFQVANWLHFVNYNQFRQVVIDGVLNQVLNDNIRNGHVVNQLMEALMQLSRQQFPTMPVDYKRSIQRGILLLSNRLGQLVDLTRLLSYNYETLMACITMNMQHVQTLTTEKLQLTSVTSLCMLIGNATVIPSPQTLFHYYNVNVNFHSNYNERINDAVAIITAANRLNLYQKKMKSIVEDFLKRLQIFDVARVPDDQMYRLRDRLRLLPVEIRRLDIFNLIAMNMEQIERASDKIAQGVIIAYRDMQLERDEMYGYVNIARNLDGFQQINLEELMRSGDYAQITNMLLNNQPVALVGALPFITDSSVISLIAKLDATVFAQIVKLRKVDTLKPILYKINSDSNDFYLVANYDWIPTSTTKVYKQVPQQFDFRASMHMLTSNLTFTVYSDLLAFVSADTVEPINAVAFDNMRIMNEL</sequence>
<comment type="function">
    <text evidence="1 3 4">Inner capsid protein that self-assembles to form an icosahedral capsid with a T=2 symmetry, which consists of 120 copies of VP2, with channels at each of its five-fold vertices (PubMed:19036817). This capsid constitutes the innermost concentric layer of the viral mature particle (PubMed:19036817). It encapsidates the polymerase VP1, the capping enzyme VP3 and the genomic dsRNA, thereby defining the core. The innermost VP2 capsid and the intermediate VP6 capsid remain intact following cell entry to protect the dsRNA from degradation and to prevent unfavorable antiviral responses in the host cell during all the replication cycle of the virus. Nascent transcripts are transcribed within the structural confines of this double-layered particle (DLP) and are extruded through the channels formed by VP2 N-termini. VP2 is required for the replicase activity of VP1 polymerase. Probably recruits a copy of a VP1-VP3 complex, potentially along with a segment of plus-strand RNA, as a decamer of VP2 assembles (By similarity). May activate the autoinhibited VP1/RNA complex to coordinate packaging and genome replication (PubMed:19000820).</text>
</comment>
<comment type="subunit">
    <text evidence="1 4">Homodecamer; each decamer is made up of two conformers of VP2, called VP2A and VP2B (By similarity). Interacts with a VP1-VP3 complex (By similarity). Interacts with the intermediate capsid protein VP6 (PubMed:19036817). Interacts with NSP5 (By similarity). Interacts (via N-terminus) with NSP2 (By similarity).</text>
</comment>
<comment type="subcellular location">
    <subcellularLocation>
        <location evidence="1">Virion</location>
    </subcellularLocation>
    <text evidence="1">Inner capsid protein. Also found in spherical cytoplasmic structures, called virus factories, that appear early after infection and are the site of viral replication and packaging.</text>
</comment>
<comment type="domain">
    <text evidence="1">The N-terminus binds RNA. It is necessary for encapsidation of VP1 and VP3. The N-termini of 10 VP2 molecules form a cylindrical hub underneath each 5-fold axis of the inner capsid.</text>
</comment>
<comment type="PTM">
    <text evidence="1">Sumoylated with SUMO1 and SUMO2. Sumoylation of viral proteins seems to have a positive role on viral replication.</text>
</comment>
<comment type="similarity">
    <text evidence="1">Belongs to the rotavirus VP2 family.</text>
</comment>